<accession>B0KKB9</accession>
<evidence type="ECO:0000255" key="1">
    <source>
        <dbReference type="HAMAP-Rule" id="MF_00423"/>
    </source>
</evidence>
<organism>
    <name type="scientific">Pseudomonas putida (strain GB-1)</name>
    <dbReference type="NCBI Taxonomy" id="76869"/>
    <lineage>
        <taxon>Bacteria</taxon>
        <taxon>Pseudomonadati</taxon>
        <taxon>Pseudomonadota</taxon>
        <taxon>Gammaproteobacteria</taxon>
        <taxon>Pseudomonadales</taxon>
        <taxon>Pseudomonadaceae</taxon>
        <taxon>Pseudomonas</taxon>
    </lineage>
</organism>
<reference key="1">
    <citation type="submission" date="2008-01" db="EMBL/GenBank/DDBJ databases">
        <title>Complete sequence of Pseudomonas putida GB-1.</title>
        <authorList>
            <consortium name="US DOE Joint Genome Institute"/>
            <person name="Copeland A."/>
            <person name="Lucas S."/>
            <person name="Lapidus A."/>
            <person name="Barry K."/>
            <person name="Glavina del Rio T."/>
            <person name="Dalin E."/>
            <person name="Tice H."/>
            <person name="Pitluck S."/>
            <person name="Bruce D."/>
            <person name="Goodwin L."/>
            <person name="Chertkov O."/>
            <person name="Brettin T."/>
            <person name="Detter J.C."/>
            <person name="Han C."/>
            <person name="Kuske C.R."/>
            <person name="Schmutz J."/>
            <person name="Larimer F."/>
            <person name="Land M."/>
            <person name="Hauser L."/>
            <person name="Kyrpides N."/>
            <person name="Kim E."/>
            <person name="McCarthy J.K."/>
            <person name="Richardson P."/>
        </authorList>
    </citation>
    <scope>NUCLEOTIDE SEQUENCE [LARGE SCALE GENOMIC DNA]</scope>
    <source>
        <strain>GB-1</strain>
    </source>
</reference>
<proteinExistence type="inferred from homology"/>
<name>SELA_PSEPG</name>
<gene>
    <name evidence="1" type="primary">selA</name>
    <name type="ordered locus">PputGB1_0536</name>
</gene>
<feature type="chain" id="PRO_1000080561" description="L-seryl-tRNA(Sec) selenium transferase">
    <location>
        <begin position="1"/>
        <end position="475"/>
    </location>
</feature>
<feature type="modified residue" description="N6-(pyridoxal phosphate)lysine" evidence="1">
    <location>
        <position position="297"/>
    </location>
</feature>
<protein>
    <recommendedName>
        <fullName evidence="1">L-seryl-tRNA(Sec) selenium transferase</fullName>
        <ecNumber evidence="1">2.9.1.1</ecNumber>
    </recommendedName>
    <alternativeName>
        <fullName evidence="1">Selenocysteine synthase</fullName>
        <shortName evidence="1">Sec synthase</shortName>
    </alternativeName>
    <alternativeName>
        <fullName evidence="1">Selenocysteinyl-tRNA(Sec) synthase</fullName>
    </alternativeName>
</protein>
<dbReference type="EC" id="2.9.1.1" evidence="1"/>
<dbReference type="EMBL" id="CP000926">
    <property type="protein sequence ID" value="ABY96447.1"/>
    <property type="molecule type" value="Genomic_DNA"/>
</dbReference>
<dbReference type="RefSeq" id="WP_012270263.1">
    <property type="nucleotide sequence ID" value="NC_010322.1"/>
</dbReference>
<dbReference type="SMR" id="B0KKB9"/>
<dbReference type="KEGG" id="ppg:PputGB1_0536"/>
<dbReference type="eggNOG" id="COG1921">
    <property type="taxonomic scope" value="Bacteria"/>
</dbReference>
<dbReference type="HOGENOM" id="CLU_038142_1_0_6"/>
<dbReference type="UniPathway" id="UPA00906">
    <property type="reaction ID" value="UER00896"/>
</dbReference>
<dbReference type="Proteomes" id="UP000002157">
    <property type="component" value="Chromosome"/>
</dbReference>
<dbReference type="GO" id="GO:0005737">
    <property type="term" value="C:cytoplasm"/>
    <property type="evidence" value="ECO:0007669"/>
    <property type="project" value="UniProtKB-SubCell"/>
</dbReference>
<dbReference type="GO" id="GO:0004125">
    <property type="term" value="F:L-seryl-tRNA(Sec) selenium transferase activity"/>
    <property type="evidence" value="ECO:0007669"/>
    <property type="project" value="UniProtKB-UniRule"/>
</dbReference>
<dbReference type="GO" id="GO:0001717">
    <property type="term" value="P:conversion of seryl-tRNAsec to selenocys-tRNAsec"/>
    <property type="evidence" value="ECO:0007669"/>
    <property type="project" value="UniProtKB-UniRule"/>
</dbReference>
<dbReference type="GO" id="GO:0001514">
    <property type="term" value="P:selenocysteine incorporation"/>
    <property type="evidence" value="ECO:0007669"/>
    <property type="project" value="UniProtKB-UniRule"/>
</dbReference>
<dbReference type="FunFam" id="3.40.640.10:FF:000028">
    <property type="entry name" value="L-seryl-tRNA(Sec) selenium transferase"/>
    <property type="match status" value="1"/>
</dbReference>
<dbReference type="Gene3D" id="3.90.1150.180">
    <property type="match status" value="1"/>
</dbReference>
<dbReference type="Gene3D" id="3.40.640.10">
    <property type="entry name" value="Type I PLP-dependent aspartate aminotransferase-like (Major domain)"/>
    <property type="match status" value="1"/>
</dbReference>
<dbReference type="HAMAP" id="MF_00423">
    <property type="entry name" value="SelA"/>
    <property type="match status" value="1"/>
</dbReference>
<dbReference type="InterPro" id="IPR015424">
    <property type="entry name" value="PyrdxlP-dep_Trfase"/>
</dbReference>
<dbReference type="InterPro" id="IPR015421">
    <property type="entry name" value="PyrdxlP-dep_Trfase_major"/>
</dbReference>
<dbReference type="InterPro" id="IPR018319">
    <property type="entry name" value="SelA-like"/>
</dbReference>
<dbReference type="InterPro" id="IPR004534">
    <property type="entry name" value="SelA_trans"/>
</dbReference>
<dbReference type="InterPro" id="IPR025862">
    <property type="entry name" value="SelA_trans_N_dom"/>
</dbReference>
<dbReference type="NCBIfam" id="TIGR00474">
    <property type="entry name" value="selA"/>
    <property type="match status" value="1"/>
</dbReference>
<dbReference type="PANTHER" id="PTHR32328">
    <property type="entry name" value="L-SERYL-TRNA(SEC) SELENIUM TRANSFERASE"/>
    <property type="match status" value="1"/>
</dbReference>
<dbReference type="PANTHER" id="PTHR32328:SF0">
    <property type="entry name" value="L-SERYL-TRNA(SEC) SELENIUM TRANSFERASE"/>
    <property type="match status" value="1"/>
</dbReference>
<dbReference type="Pfam" id="PF12390">
    <property type="entry name" value="Se-cys_synth_N"/>
    <property type="match status" value="1"/>
</dbReference>
<dbReference type="Pfam" id="PF03841">
    <property type="entry name" value="SelA"/>
    <property type="match status" value="1"/>
</dbReference>
<dbReference type="SUPFAM" id="SSF53383">
    <property type="entry name" value="PLP-dependent transferases"/>
    <property type="match status" value="1"/>
</dbReference>
<comment type="function">
    <text evidence="1">Converts seryl-tRNA(Sec) to selenocysteinyl-tRNA(Sec) required for selenoprotein biosynthesis.</text>
</comment>
<comment type="catalytic activity">
    <reaction evidence="1">
        <text>L-seryl-tRNA(Sec) + selenophosphate + H(+) = L-selenocysteinyl-tRNA(Sec) + phosphate</text>
        <dbReference type="Rhea" id="RHEA:22728"/>
        <dbReference type="Rhea" id="RHEA-COMP:9742"/>
        <dbReference type="Rhea" id="RHEA-COMP:9743"/>
        <dbReference type="ChEBI" id="CHEBI:15378"/>
        <dbReference type="ChEBI" id="CHEBI:16144"/>
        <dbReference type="ChEBI" id="CHEBI:43474"/>
        <dbReference type="ChEBI" id="CHEBI:78533"/>
        <dbReference type="ChEBI" id="CHEBI:78573"/>
        <dbReference type="EC" id="2.9.1.1"/>
    </reaction>
</comment>
<comment type="cofactor">
    <cofactor evidence="1">
        <name>pyridoxal 5'-phosphate</name>
        <dbReference type="ChEBI" id="CHEBI:597326"/>
    </cofactor>
</comment>
<comment type="pathway">
    <text evidence="1">Aminoacyl-tRNA biosynthesis; selenocysteinyl-tRNA(Sec) biosynthesis; selenocysteinyl-tRNA(Sec) from L-seryl-tRNA(Sec) (bacterial route): step 1/1.</text>
</comment>
<comment type="subcellular location">
    <subcellularLocation>
        <location evidence="1">Cytoplasm</location>
    </subcellularLocation>
</comment>
<comment type="similarity">
    <text evidence="1">Belongs to the SelA family.</text>
</comment>
<keyword id="KW-0963">Cytoplasm</keyword>
<keyword id="KW-0648">Protein biosynthesis</keyword>
<keyword id="KW-0663">Pyridoxal phosphate</keyword>
<keyword id="KW-0711">Selenium</keyword>
<keyword id="KW-0808">Transferase</keyword>
<sequence length="475" mass="51544">MSSSLASDTPRLPSIDTLLRHQACLPLIDRHGREGVLATLRQLLDDLRNLVRNGELTPAELAPEILLGRTGERLAAQQRSQVRRVFNLTGTVLHTNLGRALLPEAAIEAMQTAARYPLNLEFDLATGKRGDRDDLIEGLIRELTGAEAVTVVNNNAAAVLLALNSLGARKEGIISRGELIEIGGAFRIPDIMARAGVKLHEIGTTNRTHARDYEAAIGPRTGLLMRVHCSNYSIQGFTTQVPTAELASIAHQRDLPLLEDLGSGSLLDLTRWGLPAEPTVRQALADGADIVTFSGDKLLGGPQAGIIVGRKDLIARIKKNPLKRALRVDKITLAALEAVLALYRNPDRLAERLPTLRLLTRSQAEIQAQAERLAPEVKAHLGEQWAVSVAPALGMIGSGSQPVARLPSAALCLRPQVSKKLRGRSLHVLERALRDLPVPVLGRLDDDALWLDLRQLDDEAQWLAQLPALQLGPVQ</sequence>